<evidence type="ECO:0000255" key="1">
    <source>
        <dbReference type="HAMAP-Rule" id="MF_00009"/>
    </source>
</evidence>
<accession>Q11PC9</accession>
<protein>
    <recommendedName>
        <fullName evidence="1">Endoribonuclease YbeY</fullName>
        <ecNumber evidence="1">3.1.-.-</ecNumber>
    </recommendedName>
</protein>
<organism>
    <name type="scientific">Cytophaga hutchinsonii (strain ATCC 33406 / DSM 1761 / CIP 103989 / NBRC 15051 / NCIMB 9469 / D465)</name>
    <dbReference type="NCBI Taxonomy" id="269798"/>
    <lineage>
        <taxon>Bacteria</taxon>
        <taxon>Pseudomonadati</taxon>
        <taxon>Bacteroidota</taxon>
        <taxon>Cytophagia</taxon>
        <taxon>Cytophagales</taxon>
        <taxon>Cytophagaceae</taxon>
        <taxon>Cytophaga</taxon>
    </lineage>
</organism>
<proteinExistence type="inferred from homology"/>
<comment type="function">
    <text evidence="1">Single strand-specific metallo-endoribonuclease involved in late-stage 70S ribosome quality control and in maturation of the 3' terminus of the 16S rRNA.</text>
</comment>
<comment type="cofactor">
    <cofactor evidence="1">
        <name>Zn(2+)</name>
        <dbReference type="ChEBI" id="CHEBI:29105"/>
    </cofactor>
    <text evidence="1">Binds 1 zinc ion.</text>
</comment>
<comment type="subcellular location">
    <subcellularLocation>
        <location evidence="1">Cytoplasm</location>
    </subcellularLocation>
</comment>
<comment type="similarity">
    <text evidence="1">Belongs to the endoribonuclease YbeY family.</text>
</comment>
<dbReference type="EC" id="3.1.-.-" evidence="1"/>
<dbReference type="EMBL" id="CP000383">
    <property type="protein sequence ID" value="ABG60734.1"/>
    <property type="molecule type" value="Genomic_DNA"/>
</dbReference>
<dbReference type="RefSeq" id="WP_011586841.1">
    <property type="nucleotide sequence ID" value="NC_008255.1"/>
</dbReference>
<dbReference type="SMR" id="Q11PC9"/>
<dbReference type="STRING" id="269798.CHU_3501"/>
<dbReference type="KEGG" id="chu:CHU_3501"/>
<dbReference type="eggNOG" id="COG0319">
    <property type="taxonomic scope" value="Bacteria"/>
</dbReference>
<dbReference type="HOGENOM" id="CLU_106710_3_3_10"/>
<dbReference type="OrthoDB" id="9811984at2"/>
<dbReference type="Proteomes" id="UP000001822">
    <property type="component" value="Chromosome"/>
</dbReference>
<dbReference type="GO" id="GO:0005737">
    <property type="term" value="C:cytoplasm"/>
    <property type="evidence" value="ECO:0007669"/>
    <property type="project" value="UniProtKB-SubCell"/>
</dbReference>
<dbReference type="GO" id="GO:0004222">
    <property type="term" value="F:metalloendopeptidase activity"/>
    <property type="evidence" value="ECO:0007669"/>
    <property type="project" value="InterPro"/>
</dbReference>
<dbReference type="GO" id="GO:0004521">
    <property type="term" value="F:RNA endonuclease activity"/>
    <property type="evidence" value="ECO:0007669"/>
    <property type="project" value="UniProtKB-UniRule"/>
</dbReference>
<dbReference type="GO" id="GO:0008270">
    <property type="term" value="F:zinc ion binding"/>
    <property type="evidence" value="ECO:0007669"/>
    <property type="project" value="UniProtKB-UniRule"/>
</dbReference>
<dbReference type="GO" id="GO:0006364">
    <property type="term" value="P:rRNA processing"/>
    <property type="evidence" value="ECO:0007669"/>
    <property type="project" value="UniProtKB-UniRule"/>
</dbReference>
<dbReference type="Gene3D" id="3.40.390.30">
    <property type="entry name" value="Metalloproteases ('zincins'), catalytic domain"/>
    <property type="match status" value="1"/>
</dbReference>
<dbReference type="HAMAP" id="MF_00009">
    <property type="entry name" value="Endoribonucl_YbeY"/>
    <property type="match status" value="1"/>
</dbReference>
<dbReference type="InterPro" id="IPR023091">
    <property type="entry name" value="MetalPrtase_cat_dom_sf_prd"/>
</dbReference>
<dbReference type="InterPro" id="IPR002036">
    <property type="entry name" value="YbeY"/>
</dbReference>
<dbReference type="NCBIfam" id="TIGR00043">
    <property type="entry name" value="rRNA maturation RNase YbeY"/>
    <property type="match status" value="1"/>
</dbReference>
<dbReference type="PANTHER" id="PTHR46986">
    <property type="entry name" value="ENDORIBONUCLEASE YBEY, CHLOROPLASTIC"/>
    <property type="match status" value="1"/>
</dbReference>
<dbReference type="PANTHER" id="PTHR46986:SF1">
    <property type="entry name" value="ENDORIBONUCLEASE YBEY, CHLOROPLASTIC"/>
    <property type="match status" value="1"/>
</dbReference>
<dbReference type="Pfam" id="PF02130">
    <property type="entry name" value="YbeY"/>
    <property type="match status" value="1"/>
</dbReference>
<dbReference type="SUPFAM" id="SSF55486">
    <property type="entry name" value="Metalloproteases ('zincins'), catalytic domain"/>
    <property type="match status" value="1"/>
</dbReference>
<feature type="chain" id="PRO_0000284194" description="Endoribonuclease YbeY">
    <location>
        <begin position="1"/>
        <end position="143"/>
    </location>
</feature>
<feature type="binding site" evidence="1">
    <location>
        <position position="111"/>
    </location>
    <ligand>
        <name>Zn(2+)</name>
        <dbReference type="ChEBI" id="CHEBI:29105"/>
        <note>catalytic</note>
    </ligand>
</feature>
<feature type="binding site" evidence="1">
    <location>
        <position position="115"/>
    </location>
    <ligand>
        <name>Zn(2+)</name>
        <dbReference type="ChEBI" id="CHEBI:29105"/>
        <note>catalytic</note>
    </ligand>
</feature>
<feature type="binding site" evidence="1">
    <location>
        <position position="121"/>
    </location>
    <ligand>
        <name>Zn(2+)</name>
        <dbReference type="ChEBI" id="CHEBI:29105"/>
        <note>catalytic</note>
    </ligand>
</feature>
<sequence>MKEETIFFFKEDTQYQLRQRAEIRTWLNTIAKKEKYSILELNYIFCSDEYLLQMNRDFLDHDYYTDIITFDNSEVKGKIEGDIFISIDRVKDNAQLQHSTVKDELHRVLAHGLLHLTGYKDKTTKEKEMMRAKEDASLSLRKF</sequence>
<name>YBEY_CYTH3</name>
<reference key="1">
    <citation type="journal article" date="2007" name="Appl. Environ. Microbiol.">
        <title>Genome sequence of the cellulolytic gliding bacterium Cytophaga hutchinsonii.</title>
        <authorList>
            <person name="Xie G."/>
            <person name="Bruce D.C."/>
            <person name="Challacombe J.F."/>
            <person name="Chertkov O."/>
            <person name="Detter J.C."/>
            <person name="Gilna P."/>
            <person name="Han C.S."/>
            <person name="Lucas S."/>
            <person name="Misra M."/>
            <person name="Myers G.L."/>
            <person name="Richardson P."/>
            <person name="Tapia R."/>
            <person name="Thayer N."/>
            <person name="Thompson L.S."/>
            <person name="Brettin T.S."/>
            <person name="Henrissat B."/>
            <person name="Wilson D.B."/>
            <person name="McBride M.J."/>
        </authorList>
    </citation>
    <scope>NUCLEOTIDE SEQUENCE [LARGE SCALE GENOMIC DNA]</scope>
    <source>
        <strain>ATCC 33406 / DSM 1761 / JCM 20678 / CIP 103989 / IAM 12607 / NBRC 15051 / NCIMB 9469 / D465</strain>
    </source>
</reference>
<gene>
    <name evidence="1" type="primary">ybeY</name>
    <name type="ordered locus">CHU_3501</name>
</gene>
<keyword id="KW-0963">Cytoplasm</keyword>
<keyword id="KW-0255">Endonuclease</keyword>
<keyword id="KW-0378">Hydrolase</keyword>
<keyword id="KW-0479">Metal-binding</keyword>
<keyword id="KW-0540">Nuclease</keyword>
<keyword id="KW-1185">Reference proteome</keyword>
<keyword id="KW-0690">Ribosome biogenesis</keyword>
<keyword id="KW-0698">rRNA processing</keyword>
<keyword id="KW-0862">Zinc</keyword>